<geneLocation type="plasmid">
    <name>IncP-alpha RP4</name>
</geneLocation>
<geneLocation type="plasmid">
    <name>IncP-alpha RK2</name>
</geneLocation>
<geneLocation type="plasmid">
    <name>RP1</name>
</geneLocation>
<accession>P22997</accession>
<accession>Q52337</accession>
<accession>Q56389</accession>
<name>PARB4_ECOLX</name>
<protein>
    <recommendedName>
        <fullName>Protein ParB</fullName>
        <ecNumber evidence="3 5">3.1.-.-</ecNumber>
        <ecNumber evidence="3">3.1.12.-</ecNumber>
    </recommendedName>
</protein>
<proteinExistence type="evidence at protein level"/>
<feature type="signal peptide" evidence="10">
    <location>
        <begin position="1"/>
        <end position="26"/>
    </location>
</feature>
<feature type="chain" id="PRO_0000215282" description="Protein ParB">
    <location>
        <begin position="27"/>
        <end position="177"/>
    </location>
</feature>
<feature type="domain" description="TNase-like" evidence="2">
    <location>
        <begin position="27"/>
        <end position="157"/>
    </location>
</feature>
<feature type="active site" evidence="1">
    <location>
        <position position="53"/>
    </location>
</feature>
<feature type="active site" evidence="1">
    <location>
        <position position="61"/>
    </location>
</feature>
<feature type="active site" evidence="1">
    <location>
        <position position="95"/>
    </location>
</feature>
<sequence length="177" mass="20260">MKRRSYAMLRAAAALAVLVVASPAWAELRGEVVRIIDGDTIDVLVDKQPVRVRLVDIDAPEKRQAFGERARQALAGMVFRRHVLVDEKDTDRYGRTLGTVWVNMELASRPPQPRNVNAAMVHQGMAWAYRFHGRAADPEMLRLEQEARGKRVGLWSDPHAVEPWKWRRESNNRRDEG</sequence>
<evidence type="ECO:0000250" key="1"/>
<evidence type="ECO:0000255" key="2">
    <source>
        <dbReference type="PROSITE-ProRule" id="PRU00272"/>
    </source>
</evidence>
<evidence type="ECO:0000269" key="3">
    <source>
    </source>
</evidence>
<evidence type="ECO:0000269" key="4">
    <source>
    </source>
</evidence>
<evidence type="ECO:0000269" key="5">
    <source>
    </source>
</evidence>
<evidence type="ECO:0000303" key="6">
    <source>
    </source>
</evidence>
<evidence type="ECO:0000303" key="7">
    <source>
    </source>
</evidence>
<evidence type="ECO:0000303" key="8">
    <source>
    </source>
</evidence>
<evidence type="ECO:0000305" key="9"/>
<evidence type="ECO:0000305" key="10">
    <source>
    </source>
</evidence>
<evidence type="ECO:0000312" key="11">
    <source>
        <dbReference type="EMBL" id="AAA26415.1"/>
    </source>
</evidence>
<evidence type="ECO:0000312" key="12">
    <source>
        <dbReference type="EMBL" id="AAA26416.1"/>
    </source>
</evidence>
<evidence type="ECO:0000312" key="13">
    <source>
        <dbReference type="EMBL" id="AAA91496.1"/>
    </source>
</evidence>
<evidence type="ECO:0000312" key="14">
    <source>
        <dbReference type="EMBL" id="AAA98320.1"/>
    </source>
</evidence>
<reference evidence="11 12" key="1">
    <citation type="journal article" date="1990" name="J. Bacteriol.">
        <title>Partitioning of broad-host-range plasmid RP4 is a complex system involving site-specific recombination.</title>
        <authorList>
            <person name="Gerlitz M."/>
            <person name="Hrabak O."/>
            <person name="Schwab H."/>
        </authorList>
    </citation>
    <scope>NUCLEOTIDE SEQUENCE [GENOMIC DNA]</scope>
    <scope>FUNCTION</scope>
    <scope>DISRUPTION PHENOTYPE</scope>
    <source>
        <plasmid>IncP-alpha RP4</plasmid>
    </source>
</reference>
<reference evidence="13 14" key="2">
    <citation type="journal article" date="1993" name="J. Mol. Biol.">
        <title>Tn5053, a mercury resistance transposon with integron's ends.</title>
        <authorList>
            <person name="Kholodii G.Y."/>
            <person name="Yurieva O.V."/>
            <person name="Lomovskaya O.L."/>
            <person name="Gorlenko Z.M."/>
            <person name="Mindlin S.Z."/>
            <person name="Nikiforov V.G."/>
        </authorList>
    </citation>
    <scope>NUCLEOTIDE SEQUENCE [GENOMIC DNA] OF 1-86</scope>
    <source>
        <plasmid>RP1</plasmid>
        <transposon>Tn5053</transposon>
    </source>
</reference>
<reference key="3">
    <citation type="journal article" date="1997" name="Microbiology">
        <title>The ParB protein encoded by the RP4 par region is a Ca(2+)-dependent nuclease linearizing circular DNA substrates.</title>
        <authorList>
            <person name="Grohmann E."/>
            <person name="Stanzer T."/>
            <person name="Schwab H."/>
        </authorList>
    </citation>
    <scope>FUNCTION</scope>
    <scope>COFACTOR</scope>
    <scope>ACTIVITY REGULATION</scope>
    <scope>PROBABLE SUBCELLULAR LOCATION</scope>
    <scope>MASS SPECTROMETRY</scope>
    <source>
        <plasmid>IncP-alpha RP4</plasmid>
    </source>
</reference>
<reference key="4">
    <citation type="journal article" date="1999" name="J. Bacteriol.">
        <title>Plasmid RK2 ParB protein: purification and nuclease properties.</title>
        <authorList>
            <person name="Johnson E.P."/>
            <person name="Mincer T."/>
            <person name="Schwab H."/>
            <person name="Burgin A.B."/>
            <person name="Helinski D.R."/>
        </authorList>
    </citation>
    <scope>FUNCTION</scope>
    <scope>SUBUNIT</scope>
    <scope>DNA-BINDING</scope>
    <source>
        <plasmid>IncP-alpha RK2</plasmid>
    </source>
</reference>
<keyword id="KW-0238">DNA-binding</keyword>
<keyword id="KW-0255">Endonuclease</keyword>
<keyword id="KW-0269">Exonuclease</keyword>
<keyword id="KW-0378">Hydrolase</keyword>
<keyword id="KW-0540">Nuclease</keyword>
<keyword id="KW-0614">Plasmid</keyword>
<keyword id="KW-0616">Plasmid partition</keyword>
<keyword id="KW-0964">Secreted</keyword>
<keyword id="KW-0732">Signal</keyword>
<gene>
    <name evidence="7" type="primary">parB</name>
</gene>
<organism>
    <name type="scientific">Escherichia coli</name>
    <dbReference type="NCBI Taxonomy" id="562"/>
    <lineage>
        <taxon>Bacteria</taxon>
        <taxon>Pseudomonadati</taxon>
        <taxon>Pseudomonadota</taxon>
        <taxon>Gammaproteobacteria</taxon>
        <taxon>Enterobacterales</taxon>
        <taxon>Enterobacteriaceae</taxon>
        <taxon>Escherichia</taxon>
    </lineage>
</organism>
<comment type="function">
    <text evidence="3 4 5">Involved in plasmid partition (PubMed:2172207). An endonuclease that acts on supercoiled dsDNA, converting it first to open circular DNA and then linearizing it. Preferentially cleaves regions in dsDNA that are capable of forming ssDNA, such as AT-rich regions and sequences that can form cruciforms. Has poor endonucleolytic activity on linear DNA, has 5'-3' exonuclease activity on dsDNA cleaving generating 3'-phosphonucleotides (PubMed:10498713, PubMed:9421913).</text>
</comment>
<comment type="cofactor">
    <cofactor evidence="5">
        <name>Ca(2+)</name>
        <dbReference type="ChEBI" id="CHEBI:29108"/>
    </cofactor>
</comment>
<comment type="activity regulation">
    <text evidence="5">Endonuclease activity is inhibited by EDTA.</text>
</comment>
<comment type="subunit">
    <text evidence="3">Monomer.</text>
</comment>
<comment type="subcellular location">
    <subcellularLocation>
        <location evidence="10">Secreted</location>
    </subcellularLocation>
</comment>
<comment type="PTM">
    <text evidence="5">The N-terminus is blocked.</text>
</comment>
<comment type="mass spectrometry" mass="17535.0" method="MALDI" evidence="5"/>
<comment type="disruption phenotype">
    <text evidence="4">Loss of plasmid stability and partitioning.</text>
</comment>
<comment type="miscellaneous">
    <text evidence="6 8">Plasmids IncP-alpha RK2 and IncP-alpha RP4 are identical.</text>
</comment>
<comment type="sequence caution" evidence="9">
    <conflict type="erroneous initiation">
        <sequence resource="EMBL-CDS" id="AAA26415"/>
    </conflict>
    <text>Extended N-terminus.</text>
</comment>
<comment type="sequence caution" evidence="9">
    <conflict type="erroneous initiation">
        <sequence resource="EMBL-CDS" id="AAA26416"/>
    </conflict>
    <text>Extended N-terminus.</text>
</comment>
<dbReference type="EC" id="3.1.-.-" evidence="3 5"/>
<dbReference type="EC" id="3.1.12.-" evidence="3"/>
<dbReference type="EMBL" id="L40585">
    <property type="protein sequence ID" value="AAA98320.1"/>
    <property type="molecule type" value="Genomic_DNA"/>
</dbReference>
<dbReference type="EMBL" id="M59825">
    <property type="protein sequence ID" value="AAA26415.1"/>
    <property type="status" value="ALT_INIT"/>
    <property type="molecule type" value="Genomic_DNA"/>
</dbReference>
<dbReference type="EMBL" id="M59825">
    <property type="protein sequence ID" value="AAA26416.1"/>
    <property type="status" value="ALT_INIT"/>
    <property type="molecule type" value="Genomic_DNA"/>
</dbReference>
<dbReference type="EMBL" id="L03728">
    <property type="protein sequence ID" value="AAA91496.1"/>
    <property type="molecule type" value="Genomic_DNA"/>
</dbReference>
<dbReference type="PIR" id="C37141">
    <property type="entry name" value="C37141"/>
</dbReference>
<dbReference type="PIR" id="S32828">
    <property type="entry name" value="S32828"/>
</dbReference>
<dbReference type="RefSeq" id="WP_011205803.1">
    <property type="nucleotide sequence ID" value="NZ_VMTS01000064.1"/>
</dbReference>
<dbReference type="SMR" id="P22997"/>
<dbReference type="GO" id="GO:0005576">
    <property type="term" value="C:extracellular region"/>
    <property type="evidence" value="ECO:0007669"/>
    <property type="project" value="UniProtKB-SubCell"/>
</dbReference>
<dbReference type="GO" id="GO:0003677">
    <property type="term" value="F:DNA binding"/>
    <property type="evidence" value="ECO:0007669"/>
    <property type="project" value="UniProtKB-KW"/>
</dbReference>
<dbReference type="GO" id="GO:0004519">
    <property type="term" value="F:endonuclease activity"/>
    <property type="evidence" value="ECO:0007669"/>
    <property type="project" value="UniProtKB-KW"/>
</dbReference>
<dbReference type="GO" id="GO:0004527">
    <property type="term" value="F:exonuclease activity"/>
    <property type="evidence" value="ECO:0007669"/>
    <property type="project" value="UniProtKB-KW"/>
</dbReference>
<dbReference type="GO" id="GO:0030541">
    <property type="term" value="P:plasmid partitioning"/>
    <property type="evidence" value="ECO:0007669"/>
    <property type="project" value="UniProtKB-KW"/>
</dbReference>
<dbReference type="CDD" id="cd00175">
    <property type="entry name" value="SNc"/>
    <property type="match status" value="1"/>
</dbReference>
<dbReference type="Gene3D" id="2.40.50.90">
    <property type="match status" value="1"/>
</dbReference>
<dbReference type="InterPro" id="IPR035437">
    <property type="entry name" value="SNase_OB-fold_sf"/>
</dbReference>
<dbReference type="InterPro" id="IPR016071">
    <property type="entry name" value="Staphylococal_nuclease_OB-fold"/>
</dbReference>
<dbReference type="InterPro" id="IPR002071">
    <property type="entry name" value="Thermonucl_AS"/>
</dbReference>
<dbReference type="PANTHER" id="PTHR12302">
    <property type="entry name" value="EBNA2 BINDING PROTEIN P100"/>
    <property type="match status" value="1"/>
</dbReference>
<dbReference type="PANTHER" id="PTHR12302:SF3">
    <property type="entry name" value="SERINE_THREONINE-PROTEIN KINASE 31"/>
    <property type="match status" value="1"/>
</dbReference>
<dbReference type="Pfam" id="PF00565">
    <property type="entry name" value="SNase"/>
    <property type="match status" value="1"/>
</dbReference>
<dbReference type="SMART" id="SM00318">
    <property type="entry name" value="SNc"/>
    <property type="match status" value="1"/>
</dbReference>
<dbReference type="SUPFAM" id="SSF50199">
    <property type="entry name" value="Staphylococcal nuclease"/>
    <property type="match status" value="1"/>
</dbReference>
<dbReference type="PROSITE" id="PS01123">
    <property type="entry name" value="TNASE_1"/>
    <property type="match status" value="1"/>
</dbReference>
<dbReference type="PROSITE" id="PS01284">
    <property type="entry name" value="TNASE_2"/>
    <property type="match status" value="1"/>
</dbReference>
<dbReference type="PROSITE" id="PS50830">
    <property type="entry name" value="TNASE_3"/>
    <property type="match status" value="1"/>
</dbReference>